<feature type="chain" id="PRO_0000198833" description="High affinity 3',5'-cyclic-AMP phosphodiesterase 7A">
    <location>
        <begin position="1"/>
        <end position="482"/>
    </location>
</feature>
<feature type="domain" description="PDEase" evidence="3">
    <location>
        <begin position="136"/>
        <end position="458"/>
    </location>
</feature>
<feature type="active site" description="Proton donor" evidence="1">
    <location>
        <position position="212"/>
    </location>
</feature>
<feature type="binding site" evidence="5 6">
    <location>
        <position position="216"/>
    </location>
    <ligand>
        <name>a divalent metal cation</name>
        <dbReference type="ChEBI" id="CHEBI:60240"/>
        <label>1</label>
    </ligand>
</feature>
<feature type="binding site" evidence="5 6">
    <location>
        <position position="252"/>
    </location>
    <ligand>
        <name>a divalent metal cation</name>
        <dbReference type="ChEBI" id="CHEBI:60240"/>
        <label>1</label>
    </ligand>
</feature>
<feature type="binding site" evidence="5 6">
    <location>
        <position position="253"/>
    </location>
    <ligand>
        <name>a divalent metal cation</name>
        <dbReference type="ChEBI" id="CHEBI:60240"/>
        <label>1</label>
    </ligand>
</feature>
<feature type="binding site" evidence="5 6">
    <location>
        <position position="253"/>
    </location>
    <ligand>
        <name>a divalent metal cation</name>
        <dbReference type="ChEBI" id="CHEBI:60240"/>
        <label>2</label>
    </ligand>
</feature>
<feature type="binding site" evidence="5 6">
    <location>
        <position position="362"/>
    </location>
    <ligand>
        <name>a divalent metal cation</name>
        <dbReference type="ChEBI" id="CHEBI:60240"/>
        <label>1</label>
    </ligand>
</feature>
<feature type="modified residue" description="Phosphoserine" evidence="2">
    <location>
        <position position="84"/>
    </location>
</feature>
<feature type="splice variant" id="VSP_004593" description="In isoform PDE7A2." evidence="10 12">
    <original>MEVCYQLPVLPLDRPVPQHVLSRRGAISFSSSSALFGCPNPRQLSQ</original>
    <variation>MGITLIWCLALVLIKWITSK</variation>
    <location>
        <begin position="1"/>
        <end position="46"/>
    </location>
</feature>
<feature type="splice variant" id="VSP_038645" description="In isoform PDE7A3." evidence="9">
    <original>FMTYLVEPL</original>
    <variation>NYTYLDIAG</variation>
    <location>
        <begin position="416"/>
        <end position="424"/>
    </location>
</feature>
<feature type="splice variant" id="VSP_038646" description="In isoform PDE7A3." evidence="9">
    <location>
        <begin position="425"/>
        <end position="482"/>
    </location>
</feature>
<feature type="sequence variant" id="VAR_056661" description="In dbSNP:rs11557049.">
    <original>G</original>
    <variation>E</variation>
    <location>
        <position position="76"/>
    </location>
</feature>
<feature type="sequence conflict" description="In Ref. 4; BAF83490." evidence="13" ref="4">
    <original>D</original>
    <variation>G</variation>
    <location>
        <position position="204"/>
    </location>
</feature>
<feature type="helix" evidence="15">
    <location>
        <begin position="140"/>
        <end position="148"/>
    </location>
</feature>
<feature type="turn" evidence="15">
    <location>
        <begin position="149"/>
        <end position="152"/>
    </location>
</feature>
<feature type="helix" evidence="15">
    <location>
        <begin position="158"/>
        <end position="164"/>
    </location>
</feature>
<feature type="helix" evidence="15">
    <location>
        <begin position="169"/>
        <end position="180"/>
    </location>
</feature>
<feature type="helix" evidence="15">
    <location>
        <begin position="183"/>
        <end position="186"/>
    </location>
</feature>
<feature type="helix" evidence="15">
    <location>
        <begin position="191"/>
        <end position="203"/>
    </location>
</feature>
<feature type="strand" evidence="15">
    <location>
        <begin position="209"/>
        <end position="213"/>
    </location>
</feature>
<feature type="helix" evidence="15">
    <location>
        <begin position="214"/>
        <end position="228"/>
    </location>
</feature>
<feature type="helix" evidence="15">
    <location>
        <begin position="231"/>
        <end position="234"/>
    </location>
</feature>
<feature type="helix" evidence="15">
    <location>
        <begin position="239"/>
        <end position="251"/>
    </location>
</feature>
<feature type="turn" evidence="15">
    <location>
        <begin position="252"/>
        <end position="255"/>
    </location>
</feature>
<feature type="helix" evidence="15">
    <location>
        <begin position="261"/>
        <end position="266"/>
    </location>
</feature>
<feature type="helix" evidence="15">
    <location>
        <begin position="270"/>
        <end position="274"/>
    </location>
</feature>
<feature type="turn" evidence="15">
    <location>
        <begin position="275"/>
        <end position="277"/>
    </location>
</feature>
<feature type="helix" evidence="15">
    <location>
        <begin position="280"/>
        <end position="296"/>
    </location>
</feature>
<feature type="turn" evidence="15">
    <location>
        <begin position="297"/>
        <end position="301"/>
    </location>
</feature>
<feature type="helix" evidence="15">
    <location>
        <begin position="304"/>
        <end position="319"/>
    </location>
</feature>
<feature type="helix" evidence="15">
    <location>
        <begin position="323"/>
        <end position="325"/>
    </location>
</feature>
<feature type="helix" evidence="15">
    <location>
        <begin position="326"/>
        <end position="339"/>
    </location>
</feature>
<feature type="helix" evidence="15">
    <location>
        <begin position="347"/>
        <end position="362"/>
    </location>
</feature>
<feature type="helix" evidence="15">
    <location>
        <begin position="365"/>
        <end position="367"/>
    </location>
</feature>
<feature type="helix" evidence="15">
    <location>
        <begin position="370"/>
        <end position="393"/>
    </location>
</feature>
<feature type="turn" evidence="15">
    <location>
        <begin position="404"/>
        <end position="406"/>
    </location>
</feature>
<feature type="helix" evidence="15">
    <location>
        <begin position="409"/>
        <end position="419"/>
    </location>
</feature>
<feature type="helix" evidence="15">
    <location>
        <begin position="421"/>
        <end position="431"/>
    </location>
</feature>
<feature type="helix" evidence="15">
    <location>
        <begin position="435"/>
        <end position="453"/>
    </location>
</feature>
<sequence length="482" mass="55505">MEVCYQLPVLPLDRPVPQHVLSRRGAISFSSSSALFGCPNPRQLSQRRGAISYDSSDQTALYIRMLGDVRVRSRAGFESERRGSHPYIDFRIFHSQSEIEVSVSARNIRRLLSFQRYLRSSRFFRGTAVSNSLNILDDDYNGQAKCMLEKVGNWNFDIFLFDRLTNGNSLVSLTFHLFSLHGLIEYFHLDMMKLRRFLVMIQEDYHSQNPYHNAVHAADVTQAMHCYLKEPKLANSVTPWDILLSLIAAATHDLDHPGVNQPFLIKTNHYLATLYKNTSVLENHHWRSAVGLLRESGLFSHLPLESRQQMETQIGALILATDISRQNEYLSLFRSHLDRGDLCLEDTRHRHLVLQMALKCADICNPCRTWELSKQWSEKVTEEFFHQGDIEKKYHLGVSPLCDRHTESIANIQIGFMTYLVEPLFTEWARFSNTRLSQTMLGHVGLNKASWKGLQREQSSSEDTDAAFELNSQLLPQENRLS</sequence>
<evidence type="ECO:0000250" key="1">
    <source>
        <dbReference type="UniProtKB" id="O76083"/>
    </source>
</evidence>
<evidence type="ECO:0000255" key="2"/>
<evidence type="ECO:0000255" key="3">
    <source>
        <dbReference type="PROSITE-ProRule" id="PRU01192"/>
    </source>
</evidence>
<evidence type="ECO:0000269" key="4">
    <source>
    </source>
</evidence>
<evidence type="ECO:0000269" key="5">
    <source>
    </source>
</evidence>
<evidence type="ECO:0000269" key="6">
    <source>
    </source>
</evidence>
<evidence type="ECO:0000269" key="7">
    <source>
    </source>
</evidence>
<evidence type="ECO:0000269" key="8">
    <source>
    </source>
</evidence>
<evidence type="ECO:0000303" key="9">
    <source>
    </source>
</evidence>
<evidence type="ECO:0000303" key="10">
    <source>
    </source>
</evidence>
<evidence type="ECO:0000303" key="11">
    <source>
    </source>
</evidence>
<evidence type="ECO:0000303" key="12">
    <source>
    </source>
</evidence>
<evidence type="ECO:0000305" key="13"/>
<evidence type="ECO:0000312" key="14">
    <source>
        <dbReference type="HGNC" id="HGNC:8791"/>
    </source>
</evidence>
<evidence type="ECO:0007829" key="15">
    <source>
        <dbReference type="PDB" id="1ZKL"/>
    </source>
</evidence>
<keyword id="KW-0002">3D-structure</keyword>
<keyword id="KW-0025">Alternative splicing</keyword>
<keyword id="KW-0114">cAMP</keyword>
<keyword id="KW-0963">Cytoplasm</keyword>
<keyword id="KW-0378">Hydrolase</keyword>
<keyword id="KW-0479">Metal-binding</keyword>
<keyword id="KW-0597">Phosphoprotein</keyword>
<keyword id="KW-1267">Proteomics identification</keyword>
<keyword id="KW-1185">Reference proteome</keyword>
<reference key="1">
    <citation type="journal article" date="1993" name="J. Biol. Chem.">
        <title>Isolation and characterization of a previously undetected human cAMP phosphodiesterase by complementation of cAMP phosphodiesterase-deficient Saccharomyces cerevisiae.</title>
        <authorList>
            <person name="Michaeli T."/>
            <person name="Bloom T.J."/>
            <person name="Martins T."/>
            <person name="Loughney K."/>
            <person name="Ferguson K."/>
            <person name="Riggs M."/>
            <person name="Rodgers L."/>
            <person name="Beavo J.A."/>
            <person name="Wigler M."/>
        </authorList>
    </citation>
    <scope>NUCLEOTIDE SEQUENCE [MRNA] (ISOFORM PDE7A1)</scope>
    <scope>FUNCTION</scope>
    <scope>CATALYTIC ACTIVITY</scope>
    <scope>BIOPHYSICOCHEMICAL PROPERTIES</scope>
</reference>
<reference key="2">
    <citation type="journal article" date="1997" name="J. Biol. Chem.">
        <title>Alternative splicing of the high affinity cAMP-specific phosphodiesterase (PDE7A) mRNA in human skeletal muscle and heart.</title>
        <authorList>
            <person name="Han P."/>
            <person name="Zhu X."/>
            <person name="Michaeli T."/>
        </authorList>
    </citation>
    <scope>NUCLEOTIDE SEQUENCE [MRNA] (ISOFORM PDE7A2)</scope>
    <scope>FUNCTION</scope>
    <scope>CATALYTIC ACTIVITY</scope>
    <scope>SUBCELLULAR LOCATION</scope>
    <source>
        <tissue>Skeletal muscle</tissue>
    </source>
</reference>
<reference key="3">
    <citation type="journal article" date="2001" name="Proc. Natl. Acad. Sci. U.S.A.">
        <title>T cell activation up-regulates cyclic nucleotide phosphodiesterases 8A1 and 7A3.</title>
        <authorList>
            <person name="Glavas N.A."/>
            <person name="Ostenson C."/>
            <person name="Schaefer J.B."/>
            <person name="Vasta V."/>
            <person name="Beavo J.A."/>
        </authorList>
    </citation>
    <scope>NUCLEOTIDE SEQUENCE [MRNA] (ISOFORM PDE7A3)</scope>
</reference>
<reference key="4">
    <citation type="journal article" date="2004" name="Nat. Genet.">
        <title>Complete sequencing and characterization of 21,243 full-length human cDNAs.</title>
        <authorList>
            <person name="Ota T."/>
            <person name="Suzuki Y."/>
            <person name="Nishikawa T."/>
            <person name="Otsuki T."/>
            <person name="Sugiyama T."/>
            <person name="Irie R."/>
            <person name="Wakamatsu A."/>
            <person name="Hayashi K."/>
            <person name="Sato H."/>
            <person name="Nagai K."/>
            <person name="Kimura K."/>
            <person name="Makita H."/>
            <person name="Sekine M."/>
            <person name="Obayashi M."/>
            <person name="Nishi T."/>
            <person name="Shibahara T."/>
            <person name="Tanaka T."/>
            <person name="Ishii S."/>
            <person name="Yamamoto J."/>
            <person name="Saito K."/>
            <person name="Kawai Y."/>
            <person name="Isono Y."/>
            <person name="Nakamura Y."/>
            <person name="Nagahari K."/>
            <person name="Murakami K."/>
            <person name="Yasuda T."/>
            <person name="Iwayanagi T."/>
            <person name="Wagatsuma M."/>
            <person name="Shiratori A."/>
            <person name="Sudo H."/>
            <person name="Hosoiri T."/>
            <person name="Kaku Y."/>
            <person name="Kodaira H."/>
            <person name="Kondo H."/>
            <person name="Sugawara M."/>
            <person name="Takahashi M."/>
            <person name="Kanda K."/>
            <person name="Yokoi T."/>
            <person name="Furuya T."/>
            <person name="Kikkawa E."/>
            <person name="Omura Y."/>
            <person name="Abe K."/>
            <person name="Kamihara K."/>
            <person name="Katsuta N."/>
            <person name="Sato K."/>
            <person name="Tanikawa M."/>
            <person name="Yamazaki M."/>
            <person name="Ninomiya K."/>
            <person name="Ishibashi T."/>
            <person name="Yamashita H."/>
            <person name="Murakawa K."/>
            <person name="Fujimori K."/>
            <person name="Tanai H."/>
            <person name="Kimata M."/>
            <person name="Watanabe M."/>
            <person name="Hiraoka S."/>
            <person name="Chiba Y."/>
            <person name="Ishida S."/>
            <person name="Ono Y."/>
            <person name="Takiguchi S."/>
            <person name="Watanabe S."/>
            <person name="Yosida M."/>
            <person name="Hotuta T."/>
            <person name="Kusano J."/>
            <person name="Kanehori K."/>
            <person name="Takahashi-Fujii A."/>
            <person name="Hara H."/>
            <person name="Tanase T.-O."/>
            <person name="Nomura Y."/>
            <person name="Togiya S."/>
            <person name="Komai F."/>
            <person name="Hara R."/>
            <person name="Takeuchi K."/>
            <person name="Arita M."/>
            <person name="Imose N."/>
            <person name="Musashino K."/>
            <person name="Yuuki H."/>
            <person name="Oshima A."/>
            <person name="Sasaki N."/>
            <person name="Aotsuka S."/>
            <person name="Yoshikawa Y."/>
            <person name="Matsunawa H."/>
            <person name="Ichihara T."/>
            <person name="Shiohata N."/>
            <person name="Sano S."/>
            <person name="Moriya S."/>
            <person name="Momiyama H."/>
            <person name="Satoh N."/>
            <person name="Takami S."/>
            <person name="Terashima Y."/>
            <person name="Suzuki O."/>
            <person name="Nakagawa S."/>
            <person name="Senoh A."/>
            <person name="Mizoguchi H."/>
            <person name="Goto Y."/>
            <person name="Shimizu F."/>
            <person name="Wakebe H."/>
            <person name="Hishigaki H."/>
            <person name="Watanabe T."/>
            <person name="Sugiyama A."/>
            <person name="Takemoto M."/>
            <person name="Kawakami B."/>
            <person name="Yamazaki M."/>
            <person name="Watanabe K."/>
            <person name="Kumagai A."/>
            <person name="Itakura S."/>
            <person name="Fukuzumi Y."/>
            <person name="Fujimori Y."/>
            <person name="Komiyama M."/>
            <person name="Tashiro H."/>
            <person name="Tanigami A."/>
            <person name="Fujiwara T."/>
            <person name="Ono T."/>
            <person name="Yamada K."/>
            <person name="Fujii Y."/>
            <person name="Ozaki K."/>
            <person name="Hirao M."/>
            <person name="Ohmori Y."/>
            <person name="Kawabata A."/>
            <person name="Hikiji T."/>
            <person name="Kobatake N."/>
            <person name="Inagaki H."/>
            <person name="Ikema Y."/>
            <person name="Okamoto S."/>
            <person name="Okitani R."/>
            <person name="Kawakami T."/>
            <person name="Noguchi S."/>
            <person name="Itoh T."/>
            <person name="Shigeta K."/>
            <person name="Senba T."/>
            <person name="Matsumura K."/>
            <person name="Nakajima Y."/>
            <person name="Mizuno T."/>
            <person name="Morinaga M."/>
            <person name="Sasaki M."/>
            <person name="Togashi T."/>
            <person name="Oyama M."/>
            <person name="Hata H."/>
            <person name="Watanabe M."/>
            <person name="Komatsu T."/>
            <person name="Mizushima-Sugano J."/>
            <person name="Satoh T."/>
            <person name="Shirai Y."/>
            <person name="Takahashi Y."/>
            <person name="Nakagawa K."/>
            <person name="Okumura K."/>
            <person name="Nagase T."/>
            <person name="Nomura N."/>
            <person name="Kikuchi H."/>
            <person name="Masuho Y."/>
            <person name="Yamashita R."/>
            <person name="Nakai K."/>
            <person name="Yada T."/>
            <person name="Nakamura Y."/>
            <person name="Ohara O."/>
            <person name="Isogai T."/>
            <person name="Sugano S."/>
        </authorList>
    </citation>
    <scope>NUCLEOTIDE SEQUENCE [LARGE SCALE MRNA] (ISOFORM PDE7A1)</scope>
    <source>
        <tissue>Kidney</tissue>
        <tissue>Thymus</tissue>
    </source>
</reference>
<reference key="5">
    <citation type="journal article" date="2006" name="Nature">
        <title>DNA sequence and analysis of human chromosome 8.</title>
        <authorList>
            <person name="Nusbaum C."/>
            <person name="Mikkelsen T.S."/>
            <person name="Zody M.C."/>
            <person name="Asakawa S."/>
            <person name="Taudien S."/>
            <person name="Garber M."/>
            <person name="Kodira C.D."/>
            <person name="Schueler M.G."/>
            <person name="Shimizu A."/>
            <person name="Whittaker C.A."/>
            <person name="Chang J.L."/>
            <person name="Cuomo C.A."/>
            <person name="Dewar K."/>
            <person name="FitzGerald M.G."/>
            <person name="Yang X."/>
            <person name="Allen N.R."/>
            <person name="Anderson S."/>
            <person name="Asakawa T."/>
            <person name="Blechschmidt K."/>
            <person name="Bloom T."/>
            <person name="Borowsky M.L."/>
            <person name="Butler J."/>
            <person name="Cook A."/>
            <person name="Corum B."/>
            <person name="DeArellano K."/>
            <person name="DeCaprio D."/>
            <person name="Dooley K.T."/>
            <person name="Dorris L. III"/>
            <person name="Engels R."/>
            <person name="Gloeckner G."/>
            <person name="Hafez N."/>
            <person name="Hagopian D.S."/>
            <person name="Hall J.L."/>
            <person name="Ishikawa S.K."/>
            <person name="Jaffe D.B."/>
            <person name="Kamat A."/>
            <person name="Kudoh J."/>
            <person name="Lehmann R."/>
            <person name="Lokitsang T."/>
            <person name="Macdonald P."/>
            <person name="Major J.E."/>
            <person name="Matthews C.D."/>
            <person name="Mauceli E."/>
            <person name="Menzel U."/>
            <person name="Mihalev A.H."/>
            <person name="Minoshima S."/>
            <person name="Murayama Y."/>
            <person name="Naylor J.W."/>
            <person name="Nicol R."/>
            <person name="Nguyen C."/>
            <person name="O'Leary S.B."/>
            <person name="O'Neill K."/>
            <person name="Parker S.C.J."/>
            <person name="Polley A."/>
            <person name="Raymond C.K."/>
            <person name="Reichwald K."/>
            <person name="Rodriguez J."/>
            <person name="Sasaki T."/>
            <person name="Schilhabel M."/>
            <person name="Siddiqui R."/>
            <person name="Smith C.L."/>
            <person name="Sneddon T.P."/>
            <person name="Talamas J.A."/>
            <person name="Tenzin P."/>
            <person name="Topham K."/>
            <person name="Venkataraman V."/>
            <person name="Wen G."/>
            <person name="Yamazaki S."/>
            <person name="Young S.K."/>
            <person name="Zeng Q."/>
            <person name="Zimmer A.R."/>
            <person name="Rosenthal A."/>
            <person name="Birren B.W."/>
            <person name="Platzer M."/>
            <person name="Shimizu N."/>
            <person name="Lander E.S."/>
        </authorList>
    </citation>
    <scope>NUCLEOTIDE SEQUENCE [LARGE SCALE GENOMIC DNA]</scope>
</reference>
<reference key="6">
    <citation type="journal article" date="2004" name="Genome Res.">
        <title>The status, quality, and expansion of the NIH full-length cDNA project: the Mammalian Gene Collection (MGC).</title>
        <authorList>
            <consortium name="The MGC Project Team"/>
        </authorList>
    </citation>
    <scope>NUCLEOTIDE SEQUENCE [LARGE SCALE MRNA] (ISOFORM PDE7A2)</scope>
</reference>
<reference key="7">
    <citation type="journal article" date="2004" name="J. Immunol.">
        <title>A-kinase anchoring proteins interact with phosphodiesterases in T lymphocyte cell lines.</title>
        <authorList>
            <person name="Asirvatham A.L."/>
            <person name="Galligan S.G."/>
            <person name="Schillace R.V."/>
            <person name="Davey M.P."/>
            <person name="Vasta V."/>
            <person name="Beavo J.A."/>
            <person name="Carr D.W."/>
        </authorList>
    </citation>
    <scope>INTERACTION WITH CBFA2T3</scope>
</reference>
<reference key="8">
    <citation type="journal article" date="2005" name="J. Biol. Chem.">
        <title>Multiple elements jointly determine inhibitor selectivity of cyclic nucleotide phosphodiesterases 4 and 7.</title>
        <authorList>
            <person name="Wang H."/>
            <person name="Liu Y."/>
            <person name="Chen Y."/>
            <person name="Robinson H."/>
            <person name="Ke H."/>
        </authorList>
    </citation>
    <scope>X-RAY CRYSTALLOGRAPHY (1.67 ANGSTROMS) OF 130-482 IN COMPLEX WITH METAL IONS AND THE INHIBITOR IBMX</scope>
    <scope>ACTIVITY REGULATION</scope>
</reference>
<reference key="9">
    <citation type="journal article" date="2009" name="ChemMedChem">
        <title>Synthesis, structural analysis, and biological evaluation of thioxoquinazoline derivatives as phosphodiesterase 7 inhibitors.</title>
        <authorList>
            <person name="Castano T."/>
            <person name="Wang H."/>
            <person name="Campillo N.E."/>
            <person name="Ballester S."/>
            <person name="Gonzalez-Garcia C."/>
            <person name="Hernandez J."/>
            <person name="Perez C."/>
            <person name="Cuenca J."/>
            <person name="Perez-Castillo A."/>
            <person name="Martinez A."/>
            <person name="Huertas O."/>
            <person name="Gelpi J.L."/>
            <person name="Luque F.J."/>
            <person name="Ke H."/>
            <person name="Gil C."/>
        </authorList>
    </citation>
    <scope>X-RAY CRYSTALLOGRAPHY (2.40 ANGSTROMS) OF 139-456 IN COMPLEX WITH METAL IONS</scope>
    <scope>FUNCTION</scope>
    <scope>COFACTOR</scope>
</reference>
<accession>Q13946</accession>
<accession>A0AVH6</accession>
<accession>A8K436</accession>
<accession>A8K9G5</accession>
<accession>O15380</accession>
<accession>Q96T72</accession>
<dbReference type="EC" id="3.1.4.53" evidence="7"/>
<dbReference type="EMBL" id="L12052">
    <property type="protein sequence ID" value="AAA35644.2"/>
    <property type="molecule type" value="mRNA"/>
</dbReference>
<dbReference type="EMBL" id="U67932">
    <property type="protein sequence ID" value="AAB65772.1"/>
    <property type="molecule type" value="mRNA"/>
</dbReference>
<dbReference type="EMBL" id="AF332652">
    <property type="protein sequence ID" value="AAK57640.1"/>
    <property type="molecule type" value="mRNA"/>
</dbReference>
<dbReference type="EMBL" id="AK290801">
    <property type="protein sequence ID" value="BAF83490.1"/>
    <property type="molecule type" value="mRNA"/>
</dbReference>
<dbReference type="EMBL" id="AK292680">
    <property type="protein sequence ID" value="BAF85369.1"/>
    <property type="molecule type" value="mRNA"/>
</dbReference>
<dbReference type="EMBL" id="AC055822">
    <property type="status" value="NOT_ANNOTATED_CDS"/>
    <property type="molecule type" value="Genomic_DNA"/>
</dbReference>
<dbReference type="EMBL" id="AC100812">
    <property type="status" value="NOT_ANNOTATED_CDS"/>
    <property type="molecule type" value="Genomic_DNA"/>
</dbReference>
<dbReference type="EMBL" id="BC126360">
    <property type="protein sequence ID" value="AAI26361.1"/>
    <property type="molecule type" value="mRNA"/>
</dbReference>
<dbReference type="CCDS" id="CCDS34901.1">
    <molecule id="Q13946-2"/>
</dbReference>
<dbReference type="CCDS" id="CCDS56538.1">
    <molecule id="Q13946-1"/>
</dbReference>
<dbReference type="RefSeq" id="NP_001229247.1">
    <molecule id="Q13946-1"/>
    <property type="nucleotide sequence ID" value="NM_001242318.3"/>
</dbReference>
<dbReference type="RefSeq" id="NP_002594.1">
    <molecule id="Q13946-2"/>
    <property type="nucleotide sequence ID" value="NM_002603.4"/>
</dbReference>
<dbReference type="RefSeq" id="XP_011515842.1">
    <molecule id="Q13946-2"/>
    <property type="nucleotide sequence ID" value="XM_011517540.4"/>
</dbReference>
<dbReference type="RefSeq" id="XP_054216608.1">
    <molecule id="Q13946-2"/>
    <property type="nucleotide sequence ID" value="XM_054360633.1"/>
</dbReference>
<dbReference type="PDB" id="1ZKL">
    <property type="method" value="X-ray"/>
    <property type="resolution" value="1.67 A"/>
    <property type="chains" value="A=130-482"/>
</dbReference>
<dbReference type="PDB" id="3G3N">
    <property type="method" value="X-ray"/>
    <property type="resolution" value="2.40 A"/>
    <property type="chains" value="A=139-456"/>
</dbReference>
<dbReference type="PDB" id="4PM0">
    <property type="method" value="X-ray"/>
    <property type="resolution" value="2.10 A"/>
    <property type="chains" value="A=130-482"/>
</dbReference>
<dbReference type="PDB" id="4Y2B">
    <property type="method" value="X-ray"/>
    <property type="resolution" value="2.20 A"/>
    <property type="chains" value="A=130-482"/>
</dbReference>
<dbReference type="PDBsum" id="1ZKL"/>
<dbReference type="PDBsum" id="3G3N"/>
<dbReference type="PDBsum" id="4PM0"/>
<dbReference type="PDBsum" id="4Y2B"/>
<dbReference type="SMR" id="Q13946"/>
<dbReference type="BioGRID" id="111176">
    <property type="interactions" value="18"/>
</dbReference>
<dbReference type="CORUM" id="Q13946"/>
<dbReference type="FunCoup" id="Q13946">
    <property type="interactions" value="793"/>
</dbReference>
<dbReference type="IntAct" id="Q13946">
    <property type="interactions" value="19"/>
</dbReference>
<dbReference type="STRING" id="9606.ENSP00000385632"/>
<dbReference type="BindingDB" id="Q13946"/>
<dbReference type="ChEMBL" id="CHEMBL3012"/>
<dbReference type="DrugBank" id="DB08602">
    <property type="generic name" value="3-(2,6-difluorophenyl)-2-(methylthio)quinazolin-4(3H)-one"/>
</dbReference>
<dbReference type="DrugBank" id="DB07954">
    <property type="generic name" value="3-isobutyl-1-methyl-7H-xanthine"/>
</dbReference>
<dbReference type="DrugBank" id="DB00201">
    <property type="generic name" value="Caffeine"/>
</dbReference>
<dbReference type="DrugBank" id="DB09283">
    <property type="generic name" value="Trapidil"/>
</dbReference>
<dbReference type="DrugCentral" id="Q13946"/>
<dbReference type="GuidetoPHARMACOLOGY" id="1305"/>
<dbReference type="iPTMnet" id="Q13946"/>
<dbReference type="PhosphoSitePlus" id="Q13946"/>
<dbReference type="BioMuta" id="PDE7A"/>
<dbReference type="DMDM" id="3182958"/>
<dbReference type="MassIVE" id="Q13946"/>
<dbReference type="PaxDb" id="9606-ENSP00000385632"/>
<dbReference type="PeptideAtlas" id="Q13946"/>
<dbReference type="ProteomicsDB" id="59762">
    <molecule id="Q13946-1"/>
</dbReference>
<dbReference type="ProteomicsDB" id="59763">
    <molecule id="Q13946-2"/>
</dbReference>
<dbReference type="ProteomicsDB" id="59764">
    <molecule id="Q13946-3"/>
</dbReference>
<dbReference type="Antibodypedia" id="4363">
    <property type="antibodies" value="218 antibodies from 27 providers"/>
</dbReference>
<dbReference type="DNASU" id="5150"/>
<dbReference type="Ensembl" id="ENST00000379419.8">
    <molecule id="Q13946-2"/>
    <property type="protein sequence ID" value="ENSP00000368730.4"/>
    <property type="gene ID" value="ENSG00000205268.11"/>
</dbReference>
<dbReference type="Ensembl" id="ENST00000396642.7">
    <molecule id="Q13946-3"/>
    <property type="protein sequence ID" value="ENSP00000379881.3"/>
    <property type="gene ID" value="ENSG00000205268.11"/>
</dbReference>
<dbReference type="Ensembl" id="ENST00000401827.8">
    <molecule id="Q13946-1"/>
    <property type="protein sequence ID" value="ENSP00000385632.4"/>
    <property type="gene ID" value="ENSG00000205268.11"/>
</dbReference>
<dbReference type="GeneID" id="5150"/>
<dbReference type="KEGG" id="hsa:5150"/>
<dbReference type="MANE-Select" id="ENST00000401827.8">
    <property type="protein sequence ID" value="ENSP00000385632.4"/>
    <property type="RefSeq nucleotide sequence ID" value="NM_001242318.3"/>
    <property type="RefSeq protein sequence ID" value="NP_001229247.1"/>
</dbReference>
<dbReference type="UCSC" id="uc003xvp.4">
    <molecule id="Q13946-1"/>
    <property type="organism name" value="human"/>
</dbReference>
<dbReference type="AGR" id="HGNC:8791"/>
<dbReference type="CTD" id="5150"/>
<dbReference type="DisGeNET" id="5150"/>
<dbReference type="GeneCards" id="PDE7A"/>
<dbReference type="HGNC" id="HGNC:8791">
    <property type="gene designation" value="PDE7A"/>
</dbReference>
<dbReference type="HPA" id="ENSG00000205268">
    <property type="expression patterns" value="Tissue enhanced (lymphoid)"/>
</dbReference>
<dbReference type="MIM" id="171885">
    <property type="type" value="gene"/>
</dbReference>
<dbReference type="neXtProt" id="NX_Q13946"/>
<dbReference type="OpenTargets" id="ENSG00000205268"/>
<dbReference type="PharmGKB" id="PA33139"/>
<dbReference type="VEuPathDB" id="HostDB:ENSG00000205268"/>
<dbReference type="eggNOG" id="KOG3689">
    <property type="taxonomic scope" value="Eukaryota"/>
</dbReference>
<dbReference type="GeneTree" id="ENSGT00940000157658"/>
<dbReference type="HOGENOM" id="CLU_005940_6_5_1"/>
<dbReference type="InParanoid" id="Q13946"/>
<dbReference type="OMA" id="WDILVSL"/>
<dbReference type="OrthoDB" id="189220at2759"/>
<dbReference type="PAN-GO" id="Q13946">
    <property type="GO annotations" value="2 GO annotations based on evolutionary models"/>
</dbReference>
<dbReference type="PhylomeDB" id="Q13946"/>
<dbReference type="TreeFam" id="TF314638"/>
<dbReference type="BRENDA" id="3.1.4.53">
    <property type="organism ID" value="2681"/>
</dbReference>
<dbReference type="PathwayCommons" id="Q13946"/>
<dbReference type="Reactome" id="R-HSA-418555">
    <property type="pathway name" value="G alpha (s) signalling events"/>
</dbReference>
<dbReference type="SignaLink" id="Q13946"/>
<dbReference type="UniPathway" id="UPA00762">
    <property type="reaction ID" value="UER00747"/>
</dbReference>
<dbReference type="BioGRID-ORCS" id="5150">
    <property type="hits" value="13 hits in 1162 CRISPR screens"/>
</dbReference>
<dbReference type="CD-CODE" id="8C2F96ED">
    <property type="entry name" value="Centrosome"/>
</dbReference>
<dbReference type="ChiTaRS" id="PDE7A">
    <property type="organism name" value="human"/>
</dbReference>
<dbReference type="EvolutionaryTrace" id="Q13946"/>
<dbReference type="GeneWiki" id="PDE7A"/>
<dbReference type="GenomeRNAi" id="5150"/>
<dbReference type="Pharos" id="Q13946">
    <property type="development level" value="Tclin"/>
</dbReference>
<dbReference type="PRO" id="PR:Q13946"/>
<dbReference type="Proteomes" id="UP000005640">
    <property type="component" value="Chromosome 8"/>
</dbReference>
<dbReference type="RNAct" id="Q13946">
    <property type="molecule type" value="protein"/>
</dbReference>
<dbReference type="Bgee" id="ENSG00000205268">
    <property type="expression patterns" value="Expressed in secondary oocyte and 188 other cell types or tissues"/>
</dbReference>
<dbReference type="ExpressionAtlas" id="Q13946">
    <property type="expression patterns" value="baseline and differential"/>
</dbReference>
<dbReference type="GO" id="GO:0005829">
    <property type="term" value="C:cytosol"/>
    <property type="evidence" value="ECO:0000304"/>
    <property type="project" value="Reactome"/>
</dbReference>
<dbReference type="GO" id="GO:0004115">
    <property type="term" value="F:3',5'-cyclic-AMP phosphodiesterase activity"/>
    <property type="evidence" value="ECO:0000314"/>
    <property type="project" value="UniProtKB"/>
</dbReference>
<dbReference type="GO" id="GO:0047555">
    <property type="term" value="F:3',5'-cyclic-GMP phosphodiesterase activity"/>
    <property type="evidence" value="ECO:0000318"/>
    <property type="project" value="GO_Central"/>
</dbReference>
<dbReference type="GO" id="GO:0046872">
    <property type="term" value="F:metal ion binding"/>
    <property type="evidence" value="ECO:0007669"/>
    <property type="project" value="UniProtKB-KW"/>
</dbReference>
<dbReference type="GO" id="GO:0006198">
    <property type="term" value="P:cAMP catabolic process"/>
    <property type="evidence" value="ECO:0007669"/>
    <property type="project" value="UniProtKB-UniPathway"/>
</dbReference>
<dbReference type="GO" id="GO:0019933">
    <property type="term" value="P:cAMP-mediated signaling"/>
    <property type="evidence" value="ECO:0000318"/>
    <property type="project" value="GO_Central"/>
</dbReference>
<dbReference type="CDD" id="cd00077">
    <property type="entry name" value="HDc"/>
    <property type="match status" value="1"/>
</dbReference>
<dbReference type="FunFam" id="1.10.1300.10:FF:000004">
    <property type="entry name" value="Phosphodiesterase"/>
    <property type="match status" value="1"/>
</dbReference>
<dbReference type="Gene3D" id="1.10.1300.10">
    <property type="entry name" value="3'5'-cyclic nucleotide phosphodiesterase, catalytic domain"/>
    <property type="match status" value="1"/>
</dbReference>
<dbReference type="InterPro" id="IPR003607">
    <property type="entry name" value="HD/PDEase_dom"/>
</dbReference>
<dbReference type="InterPro" id="IPR023088">
    <property type="entry name" value="PDEase"/>
</dbReference>
<dbReference type="InterPro" id="IPR002073">
    <property type="entry name" value="PDEase_catalytic_dom"/>
</dbReference>
<dbReference type="InterPro" id="IPR036971">
    <property type="entry name" value="PDEase_catalytic_dom_sf"/>
</dbReference>
<dbReference type="InterPro" id="IPR023174">
    <property type="entry name" value="PDEase_CS"/>
</dbReference>
<dbReference type="PANTHER" id="PTHR11347">
    <property type="entry name" value="CYCLIC NUCLEOTIDE PHOSPHODIESTERASE"/>
    <property type="match status" value="1"/>
</dbReference>
<dbReference type="Pfam" id="PF00233">
    <property type="entry name" value="PDEase_I"/>
    <property type="match status" value="1"/>
</dbReference>
<dbReference type="PRINTS" id="PR00387">
    <property type="entry name" value="PDIESTERASE1"/>
</dbReference>
<dbReference type="SMART" id="SM00471">
    <property type="entry name" value="HDc"/>
    <property type="match status" value="1"/>
</dbReference>
<dbReference type="SUPFAM" id="SSF109604">
    <property type="entry name" value="HD-domain/PDEase-like"/>
    <property type="match status" value="1"/>
</dbReference>
<dbReference type="PROSITE" id="PS00126">
    <property type="entry name" value="PDEASE_I_1"/>
    <property type="match status" value="1"/>
</dbReference>
<dbReference type="PROSITE" id="PS51845">
    <property type="entry name" value="PDEASE_I_2"/>
    <property type="match status" value="1"/>
</dbReference>
<comment type="function">
    <text evidence="6 7 8">Hydrolyzes the second messenger cAMP, which is a key regulator of many important physiological processes (PubMed:19350606, PubMed:8389765, PubMed:9195912). May have a role in muscle signal transduction (PubMed:9195912).</text>
</comment>
<comment type="catalytic activity">
    <reaction evidence="7 8">
        <text>3',5'-cyclic AMP + H2O = AMP + H(+)</text>
        <dbReference type="Rhea" id="RHEA:25277"/>
        <dbReference type="ChEBI" id="CHEBI:15377"/>
        <dbReference type="ChEBI" id="CHEBI:15378"/>
        <dbReference type="ChEBI" id="CHEBI:58165"/>
        <dbReference type="ChEBI" id="CHEBI:456215"/>
        <dbReference type="EC" id="3.1.4.53"/>
    </reaction>
</comment>
<comment type="cofactor">
    <cofactor evidence="6">
        <name>a divalent metal cation</name>
        <dbReference type="ChEBI" id="CHEBI:60240"/>
    </cofactor>
    <text evidence="6">Binds 2 divalent metal cations per subunit (PubMed:19350606). Site 1 may preferentially bind zinc ions, while site 2 has a preference for magnesium and/or manganese ions (PubMed:19350606).</text>
</comment>
<comment type="activity regulation">
    <text evidence="5">Insensitive to all selective PDE inhibitors.</text>
</comment>
<comment type="biophysicochemical properties">
    <kinetics>
        <KM evidence="7">0.2 uM for 3',5'-cyclic AMP</KM>
    </kinetics>
</comment>
<comment type="pathway">
    <text evidence="7 8">Purine metabolism; 3',5'-cyclic AMP degradation; AMP from 3',5'-cyclic AMP: step 1/1.</text>
</comment>
<comment type="subunit">
    <text evidence="4 5 6">Interacts with CBFA2T3.</text>
</comment>
<comment type="subcellular location">
    <molecule>Isoform PDE7A1</molecule>
    <subcellularLocation>
        <location evidence="8">Cytoplasm</location>
        <location evidence="8">Cytosol</location>
    </subcellularLocation>
    <text evidence="8">PDE7A1 (57 kDa) is located mostly to soluble cellular fractions.</text>
</comment>
<comment type="subcellular location">
    <molecule>Isoform PDE7A2</molecule>
    <subcellularLocation>
        <location evidence="8">Cytoplasm</location>
    </subcellularLocation>
    <text evidence="8">PDE7A2 (50 kDa) is located to particulate cellular fractions.</text>
</comment>
<comment type="alternative products">
    <event type="alternative splicing"/>
    <isoform>
        <id>Q13946-1</id>
        <name evidence="12">PDE7A1</name>
        <sequence type="displayed"/>
    </isoform>
    <isoform>
        <id>Q13946-2</id>
        <name evidence="12">PDE7A2</name>
        <sequence type="described" ref="VSP_004593"/>
    </isoform>
    <isoform>
        <id>Q13946-3</id>
        <name evidence="9">PDE7A3</name>
        <sequence type="described" ref="VSP_038645 VSP_038646"/>
    </isoform>
</comment>
<comment type="tissue specificity">
    <molecule>Isoform PDE7A1</molecule>
    <text evidence="8">Found at high levels in skeletal muscle and at low levels in a variety of tissues including brain and heart (PubMed:9195912). It is expressed as well in two T-cell lines (PubMed:9195912).</text>
</comment>
<comment type="tissue specificity">
    <molecule>Isoform PDE7A2</molecule>
    <text evidence="8">Found abundantly in skeletal muscle and at low levels in heart.</text>
</comment>
<comment type="developmental stage">
    <molecule>Isoform PDE7A1</molecule>
    <text evidence="8">Developmentally regulated (PubMed:9195912). PDE7A1 and PDE7A2 are found in several fetal tissues, expression is reduced throughout development (PubMed:9195912). It persists strongly only in adult skeletal muscle (PubMed:9195912).</text>
</comment>
<comment type="developmental stage">
    <molecule>Isoform PDE7A2</molecule>
    <text evidence="8">Developmentally regulated (PubMed:9195912). PDE7A1 and PDE7A2 are found in several fetal tissues, expression is reduced throughout development (PubMed:9195912). It persists strongly only in adult skeletal muscle (PubMed:9195912).</text>
</comment>
<comment type="domain">
    <text evidence="13">Composed of a C-terminal catalytic domain containing two putative divalent metal sites and an N-terminal regulatory domain.</text>
</comment>
<comment type="similarity">
    <text evidence="13">Belongs to the cyclic nucleotide phosphodiesterase family. PDE7 subfamily.</text>
</comment>
<name>PDE7A_HUMAN</name>
<organism>
    <name type="scientific">Homo sapiens</name>
    <name type="common">Human</name>
    <dbReference type="NCBI Taxonomy" id="9606"/>
    <lineage>
        <taxon>Eukaryota</taxon>
        <taxon>Metazoa</taxon>
        <taxon>Chordata</taxon>
        <taxon>Craniata</taxon>
        <taxon>Vertebrata</taxon>
        <taxon>Euteleostomi</taxon>
        <taxon>Mammalia</taxon>
        <taxon>Eutheria</taxon>
        <taxon>Euarchontoglires</taxon>
        <taxon>Primates</taxon>
        <taxon>Haplorrhini</taxon>
        <taxon>Catarrhini</taxon>
        <taxon>Hominidae</taxon>
        <taxon>Homo</taxon>
    </lineage>
</organism>
<gene>
    <name evidence="12 14" type="primary">PDE7A</name>
</gene>
<proteinExistence type="evidence at protein level"/>
<protein>
    <recommendedName>
        <fullName evidence="13">High affinity 3',5'-cyclic-AMP phosphodiesterase 7A</fullName>
        <ecNumber evidence="7">3.1.4.53</ecNumber>
    </recommendedName>
    <alternativeName>
        <fullName evidence="11">HCP1</fullName>
    </alternativeName>
    <alternativeName>
        <fullName>TM22</fullName>
    </alternativeName>
    <alternativeName>
        <fullName evidence="13">cAMP-specific phosphodiesterase 7A</fullName>
    </alternativeName>
</protein>